<name>LPXK_BACFN</name>
<evidence type="ECO:0000255" key="1">
    <source>
        <dbReference type="HAMAP-Rule" id="MF_00409"/>
    </source>
</evidence>
<organism>
    <name type="scientific">Bacteroides fragilis (strain ATCC 25285 / DSM 2151 / CCUG 4856 / JCM 11019 / LMG 10263 / NCTC 9343 / Onslow / VPI 2553 / EN-2)</name>
    <dbReference type="NCBI Taxonomy" id="272559"/>
    <lineage>
        <taxon>Bacteria</taxon>
        <taxon>Pseudomonadati</taxon>
        <taxon>Bacteroidota</taxon>
        <taxon>Bacteroidia</taxon>
        <taxon>Bacteroidales</taxon>
        <taxon>Bacteroidaceae</taxon>
        <taxon>Bacteroides</taxon>
    </lineage>
</organism>
<accession>Q5LAA4</accession>
<sequence>MEENSIKIHKWLYPASWLYGAGVALRNKLFDWGKLQSKSFNVPIICIGNIAVGGTGKTPHTEYLIKLLHDEFQVAVLSRGYKRHTKGFILSTAESDARSIGDEPYQIQSKFSDIRVAVDEDRCHGIERLLTLKEPPVEVILLDDAFQHRYVKAGLNILLTDYHRLFCDDTLMPAGRLREPAQGKNRAQIVIVTKCPPDIKPIDYNIITKRLNLFPYQQLYFSSFRYGNLRAVFPDCATVQERKLSSLQTEEQILLITGIASPDTIIRELEIHTRNIDLLAFSDHHNFSQRDLAQIKERFGKLRKGQRLIVTTEKDATRLICHQELDEGLKPFIYALPIEVEILQNQQDNFNQHIIGYVRENTRNGSLPERKDAHKS</sequence>
<gene>
    <name evidence="1" type="primary">lpxK</name>
    <name type="ordered locus">BF3273</name>
</gene>
<feature type="chain" id="PRO_0000340821" description="Tetraacyldisaccharide 4'-kinase">
    <location>
        <begin position="1"/>
        <end position="376"/>
    </location>
</feature>
<feature type="binding site" evidence="1">
    <location>
        <begin position="51"/>
        <end position="58"/>
    </location>
    <ligand>
        <name>ATP</name>
        <dbReference type="ChEBI" id="CHEBI:30616"/>
    </ligand>
</feature>
<comment type="function">
    <text evidence="1">Transfers the gamma-phosphate of ATP to the 4'-position of a tetraacyldisaccharide 1-phosphate intermediate (termed DS-1-P) to form tetraacyldisaccharide 1,4'-bis-phosphate (lipid IVA).</text>
</comment>
<comment type="catalytic activity">
    <reaction evidence="1">
        <text>a lipid A disaccharide + ATP = a lipid IVA + ADP + H(+)</text>
        <dbReference type="Rhea" id="RHEA:67840"/>
        <dbReference type="ChEBI" id="CHEBI:15378"/>
        <dbReference type="ChEBI" id="CHEBI:30616"/>
        <dbReference type="ChEBI" id="CHEBI:176343"/>
        <dbReference type="ChEBI" id="CHEBI:176425"/>
        <dbReference type="ChEBI" id="CHEBI:456216"/>
        <dbReference type="EC" id="2.7.1.130"/>
    </reaction>
</comment>
<comment type="pathway">
    <text evidence="1">Glycolipid biosynthesis; lipid IV(A) biosynthesis; lipid IV(A) from (3R)-3-hydroxytetradecanoyl-[acyl-carrier-protein] and UDP-N-acetyl-alpha-D-glucosamine: step 6/6.</text>
</comment>
<comment type="similarity">
    <text evidence="1">Belongs to the LpxK family.</text>
</comment>
<reference key="1">
    <citation type="journal article" date="2005" name="Science">
        <title>Extensive DNA inversions in the B. fragilis genome control variable gene expression.</title>
        <authorList>
            <person name="Cerdeno-Tarraga A.-M."/>
            <person name="Patrick S."/>
            <person name="Crossman L.C."/>
            <person name="Blakely G."/>
            <person name="Abratt V."/>
            <person name="Lennard N."/>
            <person name="Poxton I."/>
            <person name="Duerden B."/>
            <person name="Harris B."/>
            <person name="Quail M.A."/>
            <person name="Barron A."/>
            <person name="Clark L."/>
            <person name="Corton C."/>
            <person name="Doggett J."/>
            <person name="Holden M.T.G."/>
            <person name="Larke N."/>
            <person name="Line A."/>
            <person name="Lord A."/>
            <person name="Norbertczak H."/>
            <person name="Ormond D."/>
            <person name="Price C."/>
            <person name="Rabbinowitsch E."/>
            <person name="Woodward J."/>
            <person name="Barrell B.G."/>
            <person name="Parkhill J."/>
        </authorList>
    </citation>
    <scope>NUCLEOTIDE SEQUENCE [LARGE SCALE GENOMIC DNA]</scope>
    <source>
        <strain>ATCC 25285 / DSM 2151 / CCUG 4856 / JCM 11019 / LMG 10263 / NCTC 9343 / Onslow / VPI 2553 / EN-2</strain>
    </source>
</reference>
<keyword id="KW-0067">ATP-binding</keyword>
<keyword id="KW-0418">Kinase</keyword>
<keyword id="KW-0441">Lipid A biosynthesis</keyword>
<keyword id="KW-0444">Lipid biosynthesis</keyword>
<keyword id="KW-0443">Lipid metabolism</keyword>
<keyword id="KW-0547">Nucleotide-binding</keyword>
<keyword id="KW-0808">Transferase</keyword>
<protein>
    <recommendedName>
        <fullName evidence="1">Tetraacyldisaccharide 4'-kinase</fullName>
        <ecNumber evidence="1">2.7.1.130</ecNumber>
    </recommendedName>
    <alternativeName>
        <fullName evidence="1">Lipid A 4'-kinase</fullName>
    </alternativeName>
</protein>
<proteinExistence type="inferred from homology"/>
<dbReference type="EC" id="2.7.1.130" evidence="1"/>
<dbReference type="EMBL" id="CR626927">
    <property type="protein sequence ID" value="CAH08969.1"/>
    <property type="molecule type" value="Genomic_DNA"/>
</dbReference>
<dbReference type="RefSeq" id="WP_010993336.1">
    <property type="nucleotide sequence ID" value="NC_003228.3"/>
</dbReference>
<dbReference type="SMR" id="Q5LAA4"/>
<dbReference type="PaxDb" id="272559-BF9343_3188"/>
<dbReference type="GeneID" id="60366249"/>
<dbReference type="KEGG" id="bfs:BF9343_3188"/>
<dbReference type="eggNOG" id="COG1663">
    <property type="taxonomic scope" value="Bacteria"/>
</dbReference>
<dbReference type="HOGENOM" id="CLU_038816_6_0_10"/>
<dbReference type="UniPathway" id="UPA00359">
    <property type="reaction ID" value="UER00482"/>
</dbReference>
<dbReference type="Proteomes" id="UP000006731">
    <property type="component" value="Chromosome"/>
</dbReference>
<dbReference type="GO" id="GO:0005886">
    <property type="term" value="C:plasma membrane"/>
    <property type="evidence" value="ECO:0007669"/>
    <property type="project" value="TreeGrafter"/>
</dbReference>
<dbReference type="GO" id="GO:0005524">
    <property type="term" value="F:ATP binding"/>
    <property type="evidence" value="ECO:0007669"/>
    <property type="project" value="UniProtKB-UniRule"/>
</dbReference>
<dbReference type="GO" id="GO:0009029">
    <property type="term" value="F:tetraacyldisaccharide 4'-kinase activity"/>
    <property type="evidence" value="ECO:0007669"/>
    <property type="project" value="UniProtKB-UniRule"/>
</dbReference>
<dbReference type="GO" id="GO:0009245">
    <property type="term" value="P:lipid A biosynthetic process"/>
    <property type="evidence" value="ECO:0007669"/>
    <property type="project" value="UniProtKB-UniRule"/>
</dbReference>
<dbReference type="GO" id="GO:0009244">
    <property type="term" value="P:lipopolysaccharide core region biosynthetic process"/>
    <property type="evidence" value="ECO:0007669"/>
    <property type="project" value="TreeGrafter"/>
</dbReference>
<dbReference type="HAMAP" id="MF_00409">
    <property type="entry name" value="LpxK"/>
    <property type="match status" value="1"/>
</dbReference>
<dbReference type="InterPro" id="IPR003758">
    <property type="entry name" value="LpxK"/>
</dbReference>
<dbReference type="InterPro" id="IPR027417">
    <property type="entry name" value="P-loop_NTPase"/>
</dbReference>
<dbReference type="NCBIfam" id="TIGR00682">
    <property type="entry name" value="lpxK"/>
    <property type="match status" value="1"/>
</dbReference>
<dbReference type="PANTHER" id="PTHR42724">
    <property type="entry name" value="TETRAACYLDISACCHARIDE 4'-KINASE"/>
    <property type="match status" value="1"/>
</dbReference>
<dbReference type="PANTHER" id="PTHR42724:SF1">
    <property type="entry name" value="TETRAACYLDISACCHARIDE 4'-KINASE, MITOCHONDRIAL-RELATED"/>
    <property type="match status" value="1"/>
</dbReference>
<dbReference type="Pfam" id="PF02606">
    <property type="entry name" value="LpxK"/>
    <property type="match status" value="1"/>
</dbReference>
<dbReference type="SUPFAM" id="SSF52540">
    <property type="entry name" value="P-loop containing nucleoside triphosphate hydrolases"/>
    <property type="match status" value="1"/>
</dbReference>